<reference key="1">
    <citation type="journal article" date="1998" name="DNA Res.">
        <title>Structural analysis of Arabidopsis thaliana chromosome 5. IV. Sequence features of the regions of 1,456,315 bp covered by nineteen physically assigned P1 and TAC clones.</title>
        <authorList>
            <person name="Sato S."/>
            <person name="Kaneko T."/>
            <person name="Kotani H."/>
            <person name="Nakamura Y."/>
            <person name="Asamizu E."/>
            <person name="Miyajima N."/>
            <person name="Tabata S."/>
        </authorList>
    </citation>
    <scope>NUCLEOTIDE SEQUENCE [LARGE SCALE GENOMIC DNA]</scope>
    <source>
        <strain>cv. Columbia</strain>
    </source>
</reference>
<reference key="2">
    <citation type="journal article" date="2017" name="Plant J.">
        <title>Araport11: a complete reannotation of the Arabidopsis thaliana reference genome.</title>
        <authorList>
            <person name="Cheng C.Y."/>
            <person name="Krishnakumar V."/>
            <person name="Chan A.P."/>
            <person name="Thibaud-Nissen F."/>
            <person name="Schobel S."/>
            <person name="Town C.D."/>
        </authorList>
    </citation>
    <scope>GENOME REANNOTATION</scope>
    <source>
        <strain>cv. Columbia</strain>
    </source>
</reference>
<reference key="3">
    <citation type="journal article" date="2003" name="Science">
        <title>Empirical analysis of transcriptional activity in the Arabidopsis genome.</title>
        <authorList>
            <person name="Yamada K."/>
            <person name="Lim J."/>
            <person name="Dale J.M."/>
            <person name="Chen H."/>
            <person name="Shinn P."/>
            <person name="Palm C.J."/>
            <person name="Southwick A.M."/>
            <person name="Wu H.C."/>
            <person name="Kim C.J."/>
            <person name="Nguyen M."/>
            <person name="Pham P.K."/>
            <person name="Cheuk R.F."/>
            <person name="Karlin-Newmann G."/>
            <person name="Liu S.X."/>
            <person name="Lam B."/>
            <person name="Sakano H."/>
            <person name="Wu T."/>
            <person name="Yu G."/>
            <person name="Miranda M."/>
            <person name="Quach H.L."/>
            <person name="Tripp M."/>
            <person name="Chang C.H."/>
            <person name="Lee J.M."/>
            <person name="Toriumi M.J."/>
            <person name="Chan M.M."/>
            <person name="Tang C.C."/>
            <person name="Onodera C.S."/>
            <person name="Deng J.M."/>
            <person name="Akiyama K."/>
            <person name="Ansari Y."/>
            <person name="Arakawa T."/>
            <person name="Banh J."/>
            <person name="Banno F."/>
            <person name="Bowser L."/>
            <person name="Brooks S.Y."/>
            <person name="Carninci P."/>
            <person name="Chao Q."/>
            <person name="Choy N."/>
            <person name="Enju A."/>
            <person name="Goldsmith A.D."/>
            <person name="Gurjal M."/>
            <person name="Hansen N.F."/>
            <person name="Hayashizaki Y."/>
            <person name="Johnson-Hopson C."/>
            <person name="Hsuan V.W."/>
            <person name="Iida K."/>
            <person name="Karnes M."/>
            <person name="Khan S."/>
            <person name="Koesema E."/>
            <person name="Ishida J."/>
            <person name="Jiang P.X."/>
            <person name="Jones T."/>
            <person name="Kawai J."/>
            <person name="Kamiya A."/>
            <person name="Meyers C."/>
            <person name="Nakajima M."/>
            <person name="Narusaka M."/>
            <person name="Seki M."/>
            <person name="Sakurai T."/>
            <person name="Satou M."/>
            <person name="Tamse R."/>
            <person name="Vaysberg M."/>
            <person name="Wallender E.K."/>
            <person name="Wong C."/>
            <person name="Yamamura Y."/>
            <person name="Yuan S."/>
            <person name="Shinozaki K."/>
            <person name="Davis R.W."/>
            <person name="Theologis A."/>
            <person name="Ecker J.R."/>
        </authorList>
    </citation>
    <scope>NUCLEOTIDE SEQUENCE [LARGE SCALE MRNA]</scope>
    <source>
        <strain>cv. Columbia</strain>
    </source>
</reference>
<accession>Q9FM89</accession>
<accession>Q93ZF9</accession>
<sequence length="422" mass="48148">MVSYRDRLSQLPDDFLLQILSWLPTKDVLVTSLLSKRWRFLWTLVPRLNYDLRLHDNTCPRFSQFVDRSLLLHKAPTLESLNIKIGSICFTAEKDVGVWVRIGVDRFVRELSVSYCSGEEPIRLPKCLFTCSTLAVLKLENITLEDASCYVCFQSLKTLHLLDVKYLDDQSLPRIISSCSSLEDLVVQRCPGDNVKVVTVTAPSLKTLSLHKSSQAFEGDDDGFLIDTPKLKRVDIEDYWGGFCYIENMPEVVEANVDVIYKNTEKLLGSITSVKRLALCLITSDAAYPAGTIFSQLVHLELCTCAPRWWDLLTRLIEDSPKLRVLKLRQKHIRRAPSPRASWKQPALPKCLLFHLETFKWELYEGSQKQKEVATFILKHAIRLKTAIISPKPTSTLLEKHEMLKDLSSSPRGSSTCELLFD</sequence>
<dbReference type="EMBL" id="AB009049">
    <property type="protein sequence ID" value="BAB11270.1"/>
    <property type="molecule type" value="Genomic_DNA"/>
</dbReference>
<dbReference type="EMBL" id="CP002688">
    <property type="protein sequence ID" value="AED96762.1"/>
    <property type="molecule type" value="Genomic_DNA"/>
</dbReference>
<dbReference type="EMBL" id="CP002688">
    <property type="protein sequence ID" value="AED96763.1"/>
    <property type="molecule type" value="Genomic_DNA"/>
</dbReference>
<dbReference type="EMBL" id="CP002688">
    <property type="protein sequence ID" value="ANM69456.1"/>
    <property type="molecule type" value="Genomic_DNA"/>
</dbReference>
<dbReference type="EMBL" id="AY057563">
    <property type="protein sequence ID" value="AAL09802.1"/>
    <property type="status" value="ALT_FRAME"/>
    <property type="molecule type" value="mRNA"/>
</dbReference>
<dbReference type="RefSeq" id="NP_001318810.1">
    <property type="nucleotide sequence ID" value="NM_001345199.1"/>
</dbReference>
<dbReference type="RefSeq" id="NP_200453.1">
    <property type="nucleotide sequence ID" value="NM_125025.3"/>
</dbReference>
<dbReference type="RefSeq" id="NP_974943.1">
    <property type="nucleotide sequence ID" value="NM_203214.1"/>
</dbReference>
<dbReference type="BioGRID" id="20987">
    <property type="interactions" value="1"/>
</dbReference>
<dbReference type="FunCoup" id="Q9FM89">
    <property type="interactions" value="666"/>
</dbReference>
<dbReference type="PaxDb" id="3702-AT5G56420.1"/>
<dbReference type="ProteomicsDB" id="230495"/>
<dbReference type="EnsemblPlants" id="AT5G56420.1">
    <property type="protein sequence ID" value="AT5G56420.1"/>
    <property type="gene ID" value="AT5G56420"/>
</dbReference>
<dbReference type="EnsemblPlants" id="AT5G56420.2">
    <property type="protein sequence ID" value="AT5G56420.2"/>
    <property type="gene ID" value="AT5G56420"/>
</dbReference>
<dbReference type="EnsemblPlants" id="AT5G56420.3">
    <property type="protein sequence ID" value="AT5G56420.3"/>
    <property type="gene ID" value="AT5G56420"/>
</dbReference>
<dbReference type="GeneID" id="835743"/>
<dbReference type="Gramene" id="AT5G56420.1">
    <property type="protein sequence ID" value="AT5G56420.1"/>
    <property type="gene ID" value="AT5G56420"/>
</dbReference>
<dbReference type="Gramene" id="AT5G56420.2">
    <property type="protein sequence ID" value="AT5G56420.2"/>
    <property type="gene ID" value="AT5G56420"/>
</dbReference>
<dbReference type="Gramene" id="AT5G56420.3">
    <property type="protein sequence ID" value="AT5G56420.3"/>
    <property type="gene ID" value="AT5G56420"/>
</dbReference>
<dbReference type="KEGG" id="ath:AT5G56420"/>
<dbReference type="Araport" id="AT5G56420"/>
<dbReference type="TAIR" id="AT5G56420"/>
<dbReference type="eggNOG" id="ENOG502SMFI">
    <property type="taxonomic scope" value="Eukaryota"/>
</dbReference>
<dbReference type="HOGENOM" id="CLU_010721_1_2_1"/>
<dbReference type="InParanoid" id="Q9FM89"/>
<dbReference type="OMA" id="YCSGEEP"/>
<dbReference type="PhylomeDB" id="Q9FM89"/>
<dbReference type="PRO" id="PR:Q9FM89"/>
<dbReference type="Proteomes" id="UP000006548">
    <property type="component" value="Chromosome 5"/>
</dbReference>
<dbReference type="ExpressionAtlas" id="Q9FM89">
    <property type="expression patterns" value="baseline and differential"/>
</dbReference>
<dbReference type="CDD" id="cd22160">
    <property type="entry name" value="F-box_AtFBL13-like"/>
    <property type="match status" value="1"/>
</dbReference>
<dbReference type="Gene3D" id="1.20.1280.50">
    <property type="match status" value="1"/>
</dbReference>
<dbReference type="Gene3D" id="3.80.10.10">
    <property type="entry name" value="Ribonuclease Inhibitor"/>
    <property type="match status" value="1"/>
</dbReference>
<dbReference type="InterPro" id="IPR036047">
    <property type="entry name" value="F-box-like_dom_sf"/>
</dbReference>
<dbReference type="InterPro" id="IPR053781">
    <property type="entry name" value="F-box_AtFBL13-like"/>
</dbReference>
<dbReference type="InterPro" id="IPR001810">
    <property type="entry name" value="F-box_dom"/>
</dbReference>
<dbReference type="InterPro" id="IPR006566">
    <property type="entry name" value="FBD"/>
</dbReference>
<dbReference type="InterPro" id="IPR050232">
    <property type="entry name" value="FBL13/AtMIF1-like"/>
</dbReference>
<dbReference type="InterPro" id="IPR032675">
    <property type="entry name" value="LRR_dom_sf"/>
</dbReference>
<dbReference type="InterPro" id="IPR055411">
    <property type="entry name" value="LRR_FXL15/At3g58940/PEG3-like"/>
</dbReference>
<dbReference type="PANTHER" id="PTHR31900:SF34">
    <property type="entry name" value="EMB|CAB62440.1-RELATED"/>
    <property type="match status" value="1"/>
</dbReference>
<dbReference type="PANTHER" id="PTHR31900">
    <property type="entry name" value="F-BOX/RNI SUPERFAMILY PROTEIN-RELATED"/>
    <property type="match status" value="1"/>
</dbReference>
<dbReference type="Pfam" id="PF00646">
    <property type="entry name" value="F-box"/>
    <property type="match status" value="1"/>
</dbReference>
<dbReference type="Pfam" id="PF08387">
    <property type="entry name" value="FBD"/>
    <property type="match status" value="1"/>
</dbReference>
<dbReference type="Pfam" id="PF24758">
    <property type="entry name" value="LRR_At5g56370"/>
    <property type="match status" value="1"/>
</dbReference>
<dbReference type="SMART" id="SM00579">
    <property type="entry name" value="FBD"/>
    <property type="match status" value="1"/>
</dbReference>
<dbReference type="SMART" id="SM00256">
    <property type="entry name" value="FBOX"/>
    <property type="match status" value="1"/>
</dbReference>
<dbReference type="SUPFAM" id="SSF81383">
    <property type="entry name" value="F-box domain"/>
    <property type="match status" value="1"/>
</dbReference>
<dbReference type="SUPFAM" id="SSF52047">
    <property type="entry name" value="RNI-like"/>
    <property type="match status" value="1"/>
</dbReference>
<dbReference type="PROSITE" id="PS50181">
    <property type="entry name" value="FBOX"/>
    <property type="match status" value="1"/>
</dbReference>
<comment type="sequence caution" evidence="2">
    <conflict type="frameshift">
        <sequence resource="EMBL-CDS" id="AAL09802"/>
    </conflict>
</comment>
<feature type="chain" id="PRO_0000283130" description="F-box/FBD/LRR-repeat protein At5g56420">
    <location>
        <begin position="1"/>
        <end position="422"/>
    </location>
</feature>
<feature type="domain" description="F-box" evidence="1">
    <location>
        <begin position="5"/>
        <end position="54"/>
    </location>
</feature>
<feature type="repeat" description="LRR 1">
    <location>
        <begin position="59"/>
        <end position="85"/>
    </location>
</feature>
<feature type="repeat" description="LRR 2">
    <location>
        <begin position="136"/>
        <end position="163"/>
    </location>
</feature>
<feature type="repeat" description="LRR 3">
    <location>
        <begin position="164"/>
        <end position="189"/>
    </location>
</feature>
<feature type="repeat" description="LRR 4">
    <location>
        <begin position="193"/>
        <end position="212"/>
    </location>
</feature>
<feature type="repeat" description="LRR 5">
    <location>
        <begin position="214"/>
        <end position="238"/>
    </location>
</feature>
<feature type="repeat" description="LRR 6">
    <location>
        <begin position="279"/>
        <end position="304"/>
    </location>
</feature>
<feature type="repeat" description="LRR 7">
    <location>
        <begin position="305"/>
        <end position="330"/>
    </location>
</feature>
<feature type="domain" description="FBD">
    <location>
        <begin position="342"/>
        <end position="391"/>
    </location>
</feature>
<organism>
    <name type="scientific">Arabidopsis thaliana</name>
    <name type="common">Mouse-ear cress</name>
    <dbReference type="NCBI Taxonomy" id="3702"/>
    <lineage>
        <taxon>Eukaryota</taxon>
        <taxon>Viridiplantae</taxon>
        <taxon>Streptophyta</taxon>
        <taxon>Embryophyta</taxon>
        <taxon>Tracheophyta</taxon>
        <taxon>Spermatophyta</taxon>
        <taxon>Magnoliopsida</taxon>
        <taxon>eudicotyledons</taxon>
        <taxon>Gunneridae</taxon>
        <taxon>Pentapetalae</taxon>
        <taxon>rosids</taxon>
        <taxon>malvids</taxon>
        <taxon>Brassicales</taxon>
        <taxon>Brassicaceae</taxon>
        <taxon>Camelineae</taxon>
        <taxon>Arabidopsis</taxon>
    </lineage>
</organism>
<protein>
    <recommendedName>
        <fullName>F-box/FBD/LRR-repeat protein At5g56420</fullName>
    </recommendedName>
</protein>
<gene>
    <name type="ordered locus">At5g56420</name>
    <name type="ORF">MCD7.18</name>
</gene>
<name>FDL38_ARATH</name>
<proteinExistence type="evidence at transcript level"/>
<evidence type="ECO:0000255" key="1">
    <source>
        <dbReference type="PROSITE-ProRule" id="PRU00080"/>
    </source>
</evidence>
<evidence type="ECO:0000305" key="2"/>
<keyword id="KW-0433">Leucine-rich repeat</keyword>
<keyword id="KW-1185">Reference proteome</keyword>
<keyword id="KW-0677">Repeat</keyword>